<evidence type="ECO:0000255" key="1"/>
<evidence type="ECO:0000256" key="2">
    <source>
        <dbReference type="SAM" id="MobiDB-lite"/>
    </source>
</evidence>
<evidence type="ECO:0000269" key="3">
    <source>
    </source>
</evidence>
<evidence type="ECO:0000269" key="4">
    <source>
    </source>
</evidence>
<evidence type="ECO:0000269" key="5">
    <source>
    </source>
</evidence>
<evidence type="ECO:0000269" key="6">
    <source>
    </source>
</evidence>
<evidence type="ECO:0000269" key="7">
    <source>
    </source>
</evidence>
<evidence type="ECO:0000269" key="8">
    <source>
    </source>
</evidence>
<evidence type="ECO:0000269" key="9">
    <source>
    </source>
</evidence>
<evidence type="ECO:0000269" key="10">
    <source>
    </source>
</evidence>
<evidence type="ECO:0000269" key="11">
    <source>
    </source>
</evidence>
<evidence type="ECO:0000269" key="12">
    <source>
    </source>
</evidence>
<evidence type="ECO:0000269" key="13">
    <source>
    </source>
</evidence>
<evidence type="ECO:0000269" key="14">
    <source>
    </source>
</evidence>
<evidence type="ECO:0000303" key="15">
    <source>
    </source>
</evidence>
<evidence type="ECO:0000303" key="16">
    <source>
    </source>
</evidence>
<evidence type="ECO:0000303" key="17">
    <source>
    </source>
</evidence>
<evidence type="ECO:0000303" key="18">
    <source>
    </source>
</evidence>
<evidence type="ECO:0000303" key="19">
    <source>
    </source>
</evidence>
<evidence type="ECO:0000303" key="20">
    <source>
    </source>
</evidence>
<evidence type="ECO:0000303" key="21">
    <source>
    </source>
</evidence>
<evidence type="ECO:0000303" key="22">
    <source>
    </source>
</evidence>
<evidence type="ECO:0000305" key="23"/>
<evidence type="ECO:0000312" key="24">
    <source>
        <dbReference type="Proteomes" id="UP000008333"/>
    </source>
</evidence>
<evidence type="ECO:0007744" key="25">
    <source>
        <dbReference type="PDB" id="3RRC"/>
    </source>
</evidence>
<evidence type="ECO:0007744" key="26">
    <source>
        <dbReference type="PDB" id="4NUU"/>
    </source>
</evidence>
<evidence type="ECO:0007744" key="27">
    <source>
        <dbReference type="PDB" id="4NUV"/>
    </source>
</evidence>
<evidence type="ECO:0007744" key="28">
    <source>
        <dbReference type="PDB" id="4YFS"/>
    </source>
</evidence>
<evidence type="ECO:0007744" key="29">
    <source>
        <dbReference type="PDB" id="5F3J"/>
    </source>
</evidence>
<evidence type="ECO:0007744" key="30">
    <source>
        <dbReference type="PDB" id="6OAN"/>
    </source>
</evidence>
<evidence type="ECO:0007744" key="31">
    <source>
        <dbReference type="PDB" id="6OAO"/>
    </source>
</evidence>
<evidence type="ECO:0007744" key="32">
    <source>
        <dbReference type="PDB" id="6R2S"/>
    </source>
</evidence>
<evidence type="ECO:0007744" key="33">
    <source>
        <dbReference type="PDB" id="8A44"/>
    </source>
</evidence>
<evidence type="ECO:0007829" key="34">
    <source>
        <dbReference type="PDB" id="3RRC"/>
    </source>
</evidence>
<evidence type="ECO:0007829" key="35">
    <source>
        <dbReference type="PDB" id="4NUU"/>
    </source>
</evidence>
<evidence type="ECO:0007829" key="36">
    <source>
        <dbReference type="PDB" id="4NUV"/>
    </source>
</evidence>
<evidence type="ECO:0007829" key="37">
    <source>
        <dbReference type="PDB" id="6OAO"/>
    </source>
</evidence>
<evidence type="ECO:0007829" key="38">
    <source>
        <dbReference type="PDB" id="6R2S"/>
    </source>
</evidence>
<evidence type="ECO:0007829" key="39">
    <source>
        <dbReference type="PDB" id="8A44"/>
    </source>
</evidence>
<sequence>MKGKNRSLFVLLVLLLLHKVNNVLLERTIETLLECKNEYVKGENGYKLAKGHHCVEEDNLERWLQGTNERRSEENIKYKYGVTELKIKYAQMNGKRSSRILKESIYGAHNFGGNSYMEGKDGGDKTGEEKDGEHKTDSKTDNGKGANNLVMLDYETSSNGQPAGTLDNVLEFVTGHEGNSRKNSSNGGNPYDIDHKKTISSAIINHAFLQNTVMKNCNYKRKRRERDWDCNTKKDVCIPDRRYQLCMKELTNLVNNTDTNFHRDITFRKLYLKRKLIYDAAVEGDLLLKLNNYRYNKDFCKDIRWSLGDFGDIIMGTDMEGIGYSKVVENNLRSIFGTDEKAQQRRKQWWNESKAQIWTAMMYSVKKRLKGNFIWICKLNVAVNIEPQIYRWIREWGRDYVSELPTEVQKLKEKCDGKINYTDKKVCKVPPCQNACKSYDQWITRKKNQWDVLSNKFISVKNAEKVQTAGIVTPYDILKQELDEFNEVAFENEINKRDGAYIELCVCSVEEAKKNTQEVVTNVDNAAKSQATNSNPISQPVDSSKAEKVPGDSTHGNVNSGQDSSTTGKAVTGDGQNGNQTPAESDVQRSDIAESVSAKNVDPQKSVSKRSDDTASVTGIAEAGKENLGASNSRPSESTVEANSPGDDTVNSASIPVVSGENPLVTPYNGLRHSKDNSDSDGPAESMANPDSNSKGETGKGQDNDMAKATKDSSNSSDGTSSATGDTTDAVDREINKGVPEDRDKTVGSKDGGGEDNSANKDAATVVGEDRIRENSAGGSTNDRSKNDTEKNGASTPDSKQSEDATALSKTESLESTESGDRTTNDTTNSLENKNGGKEKDLQKHDFKSNDTPNEEPNSDQTTDAEGHDRDSIKNDKAERRKHMNKDTFTKNTNSHHLNSNNNLSNGKLDIKEYKYRDVKATREDIILMSSVRKCNNNISLEYCNSVEDKISSNTCSREKSKNLCCSISDFCLNYFDVYSYEYLSCMKKEFEDPSYKCFTKGGFKDKTYFAAAGALLILLLLIASRKMIKNDSEEATFNEFEEYCDNIHRIPLMPNNIEHMQPSTPLDYS</sequence>
<reference key="1">
    <citation type="journal article" date="1991" name="Mol. Biochem. Parasitol.">
        <title>Cloning of the Plasmodium vivax Duffy receptor.</title>
        <authorList>
            <person name="Fang X."/>
            <person name="Kaslow D.C."/>
            <person name="Adams J.H."/>
            <person name="Miller L.H."/>
        </authorList>
    </citation>
    <scope>NUCLEOTIDE SEQUENCE [GENOMIC DNA]</scope>
</reference>
<reference evidence="24" key="2">
    <citation type="journal article" date="2008" name="Nature">
        <title>Comparative genomics of the neglected human malaria parasite Plasmodium vivax.</title>
        <authorList>
            <person name="Carlton J.M."/>
            <person name="Adams J.H."/>
            <person name="Silva J.C."/>
            <person name="Bidwell S.L."/>
            <person name="Lorenzi H."/>
            <person name="Caler E."/>
            <person name="Crabtree J."/>
            <person name="Angiuoli S.V."/>
            <person name="Merino E.F."/>
            <person name="Amedeo P."/>
            <person name="Cheng Q."/>
            <person name="Coulson R.M.R."/>
            <person name="Crabb B.S."/>
            <person name="del Portillo H.A."/>
            <person name="Essien K."/>
            <person name="Feldblyum T.V."/>
            <person name="Fernandez-Becerra C."/>
            <person name="Gilson P.R."/>
            <person name="Gueye A.H."/>
            <person name="Guo X."/>
            <person name="Kang'a S."/>
            <person name="Kooij T.W.A."/>
            <person name="Korsinczky M."/>
            <person name="Meyer E.V.-S."/>
            <person name="Nene V."/>
            <person name="Paulsen I."/>
            <person name="White O."/>
            <person name="Ralph S.A."/>
            <person name="Ren Q."/>
            <person name="Sargeant T.J."/>
            <person name="Salzberg S.L."/>
            <person name="Stoeckert C.J."/>
            <person name="Sullivan S.A."/>
            <person name="Yamamoto M.M."/>
            <person name="Hoffman S.L."/>
            <person name="Wortman J.R."/>
            <person name="Gardner M.J."/>
            <person name="Galinski M.R."/>
            <person name="Barnwell J.W."/>
            <person name="Fraser-Liggett C.M."/>
        </authorList>
    </citation>
    <scope>NUCLEOTIDE SEQUENCE [LARGE SCALE GENOMIC DNA]</scope>
    <source>
        <strain evidence="24">Salvador I</strain>
    </source>
</reference>
<reference key="3">
    <citation type="journal article" date="1996" name="J. Exp. Med.">
        <title>The domain on the Duffy blood group antigen for binding Plasmodium vivax and P. knowlesi malarial parasites to erythrocytes.</title>
        <authorList>
            <person name="Chitnis C.E."/>
            <person name="Chaudhuri A."/>
            <person name="Horuk R."/>
            <person name="Pogo A.O."/>
            <person name="Miller L.H."/>
        </authorList>
    </citation>
    <scope>FUNCTION</scope>
    <scope>INTERACTION WITH HUMAN ACKR1</scope>
</reference>
<reference key="4">
    <citation type="journal article" date="1999" name="Proc. Natl. Acad. Sci. U.S.A.">
        <title>Mapping regions containing binding residues within functional domains of Plasmodium vivax and Plasmodium knowlesi erythrocyte-binding proteins.</title>
        <authorList>
            <person name="Ranjan A."/>
            <person name="Chitnis C.E."/>
        </authorList>
    </citation>
    <scope>FUNCTION</scope>
    <scope>INTERACTION WITH HUMAN ACKR1</scope>
</reference>
<reference key="5">
    <citation type="journal article" date="2001" name="J. Biol. Chem.">
        <title>Biochemical, biophysical, and functional characterization of bacterially expressed and refolded receptor binding domain of Plasmodium vivax duffy-binding protein.</title>
        <authorList>
            <person name="Singh S."/>
            <person name="Pandey K."/>
            <person name="Chattopadhayay R."/>
            <person name="Yazdani S.S."/>
            <person name="Lynn A."/>
            <person name="Bharadwaj A."/>
            <person name="Ranjan A."/>
            <person name="Chitnis C."/>
        </authorList>
    </citation>
    <scope>FUNCTION</scope>
    <scope>INTERACTION WITH HUMAN ACKR1</scope>
    <scope>PVRII DOMAIN</scope>
</reference>
<reference key="6">
    <citation type="journal article" date="2005" name="Mol. Biochem. Parasitol.">
        <title>Fine mapping of the Duffy antigen binding site for the Plasmodium vivax Duffy-binding protein.</title>
        <authorList>
            <person name="Tournamille C."/>
            <person name="Filipe A."/>
            <person name="Badaut C."/>
            <person name="Riottot M.M."/>
            <person name="Longacre S."/>
            <person name="Cartron J.P."/>
            <person name="Le Van Kim C."/>
            <person name="Colin Y."/>
        </authorList>
    </citation>
    <scope>FUNCTION</scope>
    <scope>INTERACTION WITH HUMAN ACKR1</scope>
</reference>
<reference key="7">
    <citation type="journal article" date="2005" name="Mol. Microbiol.">
        <title>Mapping binding residues in the Plasmodium vivax domain that binds Duffy antigen during red cell invasion.</title>
        <authorList>
            <person name="Hans D."/>
            <person name="Pattnaik P."/>
            <person name="Bhattacharyya A."/>
            <person name="Shakri A.R."/>
            <person name="Yazdani S.S."/>
            <person name="Sharma M."/>
            <person name="Choe H."/>
            <person name="Farzan M."/>
            <person name="Chitnis C.E."/>
        </authorList>
    </citation>
    <scope>FUNCTION</scope>
    <scope>INTERACTION WITH HUMAN ACKR1</scope>
    <scope>PVRII DOMAIN</scope>
    <scope>MUTAGENESIS OF ARG-274; ASN-291; TYR-293; PHE-299; ASP-339; GLU-340; GLN-344; GLN-348; TYR-363; PHE-373; ILE-376 AND ARG-398</scope>
</reference>
<reference evidence="25" key="8">
    <citation type="journal article" date="2011" name="Nat. Struct. Mol. Biol.">
        <title>Dimerization of Plasmodium vivax DBP is induced upon receptor binding and drives recognition of DARC.</title>
        <authorList>
            <person name="Batchelor J.D."/>
            <person name="Zahm J.A."/>
            <person name="Tolia N.H."/>
        </authorList>
    </citation>
    <scope>X-RAY CRYSTALLOGRAPHY (1.95 ANGSTROMS) OF 211-525</scope>
    <scope>FUNCTION</scope>
    <scope>SUBUNIT</scope>
    <scope>INTERACTION WITH HUMAN ACKR1</scope>
    <scope>PVRII DOMAIN</scope>
    <scope>DISULFIDE BONDS</scope>
    <scope>MUTAGENESIS OF LYS-273 AND ARG-274</scope>
</reference>
<reference evidence="26 27" key="9">
    <citation type="journal article" date="2014" name="PLoS Pathog.">
        <title>Red blood cell invasion by Plasmodium vivax: structural basis for DBP engagement of DARC.</title>
        <authorList>
            <person name="Batchelor J.D."/>
            <person name="Malpede B.M."/>
            <person name="Omattage N.S."/>
            <person name="DeKoster G.T."/>
            <person name="Henzler-Wildman K.A."/>
            <person name="Tolia N.H."/>
        </authorList>
    </citation>
    <scope>X-RAY CRYSTALLOGRAPHY (1.95 ANGSTROMS) OF 211-525 IN COMPLEX WITH 14-43 OF HUMAN ACKR1</scope>
    <scope>FUNCTION</scope>
    <scope>SUBUNIT</scope>
    <scope>INTERACTION WITH HUMAN ACKR1</scope>
    <scope>PVRII DOMAIN</scope>
    <scope>DISULFIDE BONDS</scope>
    <scope>MUTAGENESIS OF ASP-264; ILE-265; THR-266; ALA-281; GLN-356 AND TYR-363</scope>
</reference>
<reference evidence="28" key="10">
    <citation type="journal article" date="2015" name="PLoS Negl. Trop. Dis.">
        <title>Structural analysis of the synthetic Duffy Binding Protein (DBP) antigen DEKnull relevant for Plasmodium vivax malaria vaccine design.</title>
        <authorList>
            <person name="Chen E."/>
            <person name="Salinas N.D."/>
            <person name="Ntumngia F.B."/>
            <person name="Adams J.H."/>
            <person name="Tolia N.H."/>
        </authorList>
    </citation>
    <scope>X-RAY CRYSTALLOGRAPHY (2.10 ANGSTROMS) OF 198-521</scope>
    <scope>DISULFIDE BONDS</scope>
</reference>
<reference evidence="29" key="11">
    <citation type="journal article" date="2016" name="Proc. Natl. Acad. Sci. U.S.A.">
        <title>Broadly neutralizing epitopes in the Plasmodium vivax vaccine candidate Duffy Binding Protein.</title>
        <authorList>
            <person name="Chen E."/>
            <person name="Salinas N.D."/>
            <person name="Huang Y."/>
            <person name="Ntumngia F."/>
            <person name="Plasencia M.D."/>
            <person name="Gross M.L."/>
            <person name="Adams J.H."/>
            <person name="Tolia N.H."/>
        </authorList>
    </citation>
    <scope>X-RAY CRYSTALLOGRAPHY (4.0 ANGSTROMS) OF 211-525 IN COMPLEX WITH INHIBITORY MONOCLONAL ANTIBODY</scope>
    <scope>DISULFIDE BONDS</scope>
</reference>
<reference evidence="30 31" key="12">
    <citation type="journal article" date="2019" name="Nat. Microbiol.">
        <title>Structural basis for neutralization of Plasmodium vivax by naturally acquired human antibodies that target DBP.</title>
        <authorList>
            <person name="Urusova D."/>
            <person name="Carias L."/>
            <person name="Huang Y."/>
            <person name="Nicolete V.C."/>
            <person name="Popovici J."/>
            <person name="Roesch C."/>
            <person name="Salinas N.D."/>
            <person name="Dechavanne S."/>
            <person name="Witkowski B."/>
            <person name="Ferreira M.U."/>
            <person name="Adams J.H."/>
            <person name="Gross M.L."/>
            <person name="King C.L."/>
            <person name="Tolia N.H."/>
        </authorList>
    </citation>
    <scope>X-RAY CRYSTALLOGRAPHY (2.90 ANGSTROMS) OF 211-525 IN COMPLEX WITH HUMAN NEUTRALIZING ANTIBODY</scope>
    <scope>DISULFIDE BONDS</scope>
</reference>
<reference key="13">
    <citation type="journal article" date="2019" name="Nat. Microbiol.">
        <title>Author Correction: Structural basis for neutralization of Plasmodium vivax by naturally acquired human antibodies that target DBP.</title>
        <authorList>
            <person name="Urusova D."/>
            <person name="Carias L."/>
            <person name="Huang Y."/>
            <person name="Nicolete V.C."/>
            <person name="Popovici J."/>
            <person name="Roesch C."/>
            <person name="Salinas N.D."/>
            <person name="Dechavanne S."/>
            <person name="Witkowski B."/>
            <person name="Ferreira M.U."/>
            <person name="Adams J.H."/>
            <person name="Gross M.L."/>
            <person name="King C.L."/>
            <person name="Tolia N.H."/>
        </authorList>
    </citation>
    <scope>ERRATUM OF PUBMED:31133752</scope>
</reference>
<reference evidence="32" key="14">
    <citation type="journal article" date="2019" name="Nat. Microbiol.">
        <title>Structural basis for inhibition of Plasmodium vivax invasion by a broadly neutralizing vaccine-induced human antibody.</title>
        <authorList>
            <person name="Rawlinson T.A."/>
            <person name="Barber N.M."/>
            <person name="Mohring F."/>
            <person name="Cho J.S."/>
            <person name="Kosaisavee V."/>
            <person name="Gerard S.F."/>
            <person name="Alanine D.G.W."/>
            <person name="Labbe G.M."/>
            <person name="Elias S.C."/>
            <person name="Silk S.E."/>
            <person name="Quinkert D."/>
            <person name="Jin J."/>
            <person name="Marshall J.M."/>
            <person name="Payne R.O."/>
            <person name="Minassian A.M."/>
            <person name="Russell B."/>
            <person name="Renia L."/>
            <person name="Nosten F.H."/>
            <person name="Moon R.W."/>
            <person name="Higgins M.K."/>
            <person name="Draper S.J."/>
        </authorList>
    </citation>
    <scope>X-RAY CRYSTALLOGRAPHY (3.04 ANGSTROMS) OF 211-508 IN COMPLEX WITH HUMAN NEUTRALIZING ANTIBODY</scope>
    <scope>DISULFIDE BONDS</scope>
</reference>
<reference evidence="33" key="15">
    <citation type="journal article" date="2023" name="Nat. Commun.">
        <title>Structural basis for DARC binding in reticulocyte invasion by Plasmodium vivax.</title>
        <authorList>
            <person name="Moskovitz R."/>
            <person name="Pholcharee T."/>
            <person name="DonVito S.M."/>
            <person name="Guloglu B."/>
            <person name="Lowe E."/>
            <person name="Mohring F."/>
            <person name="Moon R.W."/>
            <person name="Higgins M.K."/>
        </authorList>
    </citation>
    <scope>X-RAY CRYSTALLOGRAPHY (2.49 ANGSTROMS) OF 215-508 IN COMPLEX WITH 1-60 OF HUMAN ACKR1 SULFATED AT TYR-41 AND MONOCLONAL ANTIBODY</scope>
    <scope>DISULFIDE BONDS</scope>
</reference>
<protein>
    <recommendedName>
        <fullName evidence="19">Duffy receptor</fullName>
    </recommendedName>
    <alternativeName>
        <fullName evidence="23">Duffy receptor precursor</fullName>
    </alternativeName>
    <alternativeName>
        <fullName evidence="16 17 18 20 21 22">Duffy-binding protein</fullName>
        <shortName evidence="17 18 20 22">PvDBP</shortName>
    </alternativeName>
    <alternativeName>
        <fullName evidence="15">Erythrocyte-binding protein</fullName>
    </alternativeName>
</protein>
<gene>
    <name type="primary">PVDR</name>
    <name evidence="18 20 21" type="synonym">DBP</name>
</gene>
<name>PVDR_PLAVS</name>
<organism>
    <name type="scientific">Plasmodium vivax (strain Salvador I)</name>
    <dbReference type="NCBI Taxonomy" id="126793"/>
    <lineage>
        <taxon>Eukaryota</taxon>
        <taxon>Sar</taxon>
        <taxon>Alveolata</taxon>
        <taxon>Apicomplexa</taxon>
        <taxon>Aconoidasida</taxon>
        <taxon>Haemosporida</taxon>
        <taxon>Plasmodiidae</taxon>
        <taxon>Plasmodium</taxon>
        <taxon>Plasmodium (Plasmodium)</taxon>
    </lineage>
</organism>
<keyword id="KW-0002">3D-structure</keyword>
<keyword id="KW-1015">Disulfide bond</keyword>
<keyword id="KW-0325">Glycoprotein</keyword>
<keyword id="KW-0461">Malaria</keyword>
<keyword id="KW-0472">Membrane</keyword>
<keyword id="KW-0675">Receptor</keyword>
<keyword id="KW-1185">Reference proteome</keyword>
<keyword id="KW-0732">Signal</keyword>
<keyword id="KW-0812">Transmembrane</keyword>
<keyword id="KW-1133">Transmembrane helix</keyword>
<feature type="signal peptide" evidence="1">
    <location>
        <begin position="1"/>
        <end position="20"/>
    </location>
</feature>
<feature type="chain" id="PRO_0000024621" description="Duffy receptor">
    <location>
        <begin position="21"/>
        <end position="1070"/>
    </location>
</feature>
<feature type="topological domain" description="Extracellular" evidence="1">
    <location>
        <begin position="21"/>
        <end position="1007"/>
    </location>
</feature>
<feature type="transmembrane region" description="Helical" evidence="1">
    <location>
        <begin position="1008"/>
        <end position="1025"/>
    </location>
</feature>
<feature type="topological domain" description="Cytoplasmic" evidence="1">
    <location>
        <begin position="1026"/>
        <end position="1070"/>
    </location>
</feature>
<feature type="region of interest" description="Disordered" evidence="2">
    <location>
        <begin position="116"/>
        <end position="146"/>
    </location>
</feature>
<feature type="region of interest" description="PvRII region; mediates ACKR1 binding" evidence="4 5 7 8">
    <location>
        <begin position="211"/>
        <end position="521"/>
    </location>
</feature>
<feature type="region of interest" description="Disordered" evidence="2">
    <location>
        <begin position="525"/>
        <end position="906"/>
    </location>
</feature>
<feature type="compositionally biased region" description="Basic and acidic residues" evidence="2">
    <location>
        <begin position="118"/>
        <end position="142"/>
    </location>
</feature>
<feature type="compositionally biased region" description="Polar residues" evidence="2">
    <location>
        <begin position="525"/>
        <end position="542"/>
    </location>
</feature>
<feature type="compositionally biased region" description="Polar residues" evidence="2">
    <location>
        <begin position="554"/>
        <end position="569"/>
    </location>
</feature>
<feature type="compositionally biased region" description="Polar residues" evidence="2">
    <location>
        <begin position="629"/>
        <end position="642"/>
    </location>
</feature>
<feature type="compositionally biased region" description="Basic and acidic residues" evidence="2">
    <location>
        <begin position="697"/>
        <end position="711"/>
    </location>
</feature>
<feature type="compositionally biased region" description="Low complexity" evidence="2">
    <location>
        <begin position="712"/>
        <end position="728"/>
    </location>
</feature>
<feature type="compositionally biased region" description="Basic and acidic residues" evidence="2">
    <location>
        <begin position="730"/>
        <end position="748"/>
    </location>
</feature>
<feature type="compositionally biased region" description="Low complexity" evidence="2">
    <location>
        <begin position="808"/>
        <end position="817"/>
    </location>
</feature>
<feature type="compositionally biased region" description="Basic and acidic residues" evidence="2">
    <location>
        <begin position="835"/>
        <end position="849"/>
    </location>
</feature>
<feature type="compositionally biased region" description="Basic and acidic residues" evidence="2">
    <location>
        <begin position="865"/>
        <end position="889"/>
    </location>
</feature>
<feature type="compositionally biased region" description="Low complexity" evidence="2">
    <location>
        <begin position="895"/>
        <end position="906"/>
    </location>
</feature>
<feature type="glycosylation site" description="N-linked (GlcNAc...) asparagine" evidence="1">
    <location>
        <position position="183"/>
    </location>
</feature>
<feature type="glycosylation site" description="N-linked (GlcNAc...) asparagine" evidence="1">
    <location>
        <position position="255"/>
    </location>
</feature>
<feature type="glycosylation site" description="N-linked (GlcNAc...) asparagine" evidence="1">
    <location>
        <position position="351"/>
    </location>
</feature>
<feature type="glycosylation site" description="N-linked (GlcNAc...) asparagine" evidence="1">
    <location>
        <position position="420"/>
    </location>
</feature>
<feature type="glycosylation site" description="N-linked (GlcNAc...) asparagine" evidence="1">
    <location>
        <position position="715"/>
    </location>
</feature>
<feature type="glycosylation site" description="N-linked (GlcNAc...) asparagine" evidence="1">
    <location>
        <position position="787"/>
    </location>
</feature>
<feature type="glycosylation site" description="N-linked (GlcNAc...) asparagine" evidence="1">
    <location>
        <position position="825"/>
    </location>
</feature>
<feature type="glycosylation site" description="N-linked (GlcNAc...) asparagine" evidence="1">
    <location>
        <position position="903"/>
    </location>
</feature>
<feature type="glycosylation site" description="N-linked (GlcNAc...) asparagine" evidence="1">
    <location>
        <position position="938"/>
    </location>
</feature>
<feature type="disulfide bond" evidence="7 8 9 11 12 13 25 26 27 28 30 31 32 33">
    <location>
        <begin position="217"/>
        <end position="246"/>
    </location>
</feature>
<feature type="disulfide bond" evidence="7 8 9 10 11 12 13 25 26 27 28 29 30 31 32 33">
    <location>
        <begin position="230"/>
        <end position="237"/>
    </location>
</feature>
<feature type="disulfide bond" evidence="7 8 9 11 12 13 25 26 27 28 30 31 32 33">
    <location>
        <begin position="300"/>
        <end position="377"/>
    </location>
</feature>
<feature type="disulfide bond" evidence="7 8 9 10 12 13 25 26 27 28 29 31 32 33">
    <location>
        <begin position="415"/>
        <end position="432"/>
    </location>
</feature>
<feature type="disulfide bond" evidence="7 8 9 12 13 25 26 27 28 31 32 33">
    <location>
        <begin position="427"/>
        <end position="507"/>
    </location>
</feature>
<feature type="disulfide bond" evidence="7 8 9 10 12 13 25 26 27 28 29 31 32 33">
    <location>
        <begin position="436"/>
        <end position="505"/>
    </location>
</feature>
<feature type="mutagenesis site" description="Reduces erythrocyte binding." evidence="8">
    <original>D</original>
    <variation>R</variation>
    <variation>W</variation>
    <location>
        <position position="264"/>
    </location>
</feature>
<feature type="mutagenesis site" description="Reduces erythrocyte binding." evidence="8">
    <original>I</original>
    <variation>R</variation>
    <location>
        <position position="265"/>
    </location>
</feature>
<feature type="mutagenesis site" description="Reduces erythrocyte binding." evidence="8">
    <original>T</original>
    <variation>W</variation>
    <location>
        <position position="266"/>
    </location>
</feature>
<feature type="mutagenesis site" description="Reduces erythrocyte binding." evidence="7">
    <original>K</original>
    <variation>A</variation>
    <location>
        <position position="273"/>
    </location>
</feature>
<feature type="mutagenesis site" description="Slightly reduces binding to ACKR1. Reduces erythrocyte binding." evidence="5 7">
    <original>R</original>
    <variation>A</variation>
    <location>
        <position position="274"/>
    </location>
</feature>
<feature type="mutagenesis site" description="Abolishes erythrocyte binding." evidence="7">
    <original>R</original>
    <variation>E</variation>
    <location>
        <position position="274"/>
    </location>
</feature>
<feature type="mutagenesis site" description="Abolishes erythrocyte binding." evidence="8">
    <original>A</original>
    <variation>L</variation>
    <location>
        <position position="281"/>
    </location>
</feature>
<feature type="mutagenesis site" description="Moderately reduces binding to ACKR1." evidence="5">
    <original>N</original>
    <variation>A</variation>
    <location>
        <position position="291"/>
    </location>
</feature>
<feature type="mutagenesis site" description="Slightly reduces binding to ACKR1." evidence="5">
    <original>Y</original>
    <variation>A</variation>
    <location>
        <position position="293"/>
    </location>
</feature>
<feature type="mutagenesis site" description="Significantly reduces binding to ACKR1." evidence="5">
    <original>F</original>
    <variation>A</variation>
    <location>
        <position position="299"/>
    </location>
</feature>
<feature type="mutagenesis site" description="Slightly reduces binding to ACKR1." evidence="5">
    <original>D</original>
    <variation>A</variation>
    <location>
        <position position="339"/>
    </location>
</feature>
<feature type="mutagenesis site" description="Slightly reduces binding to ACKR1." evidence="5">
    <original>E</original>
    <variation>A</variation>
    <location>
        <position position="340"/>
    </location>
</feature>
<feature type="mutagenesis site" description="No significant effect on binding to ACKR1." evidence="5">
    <original>Q</original>
    <variation>A</variation>
    <location>
        <position position="344"/>
    </location>
</feature>
<feature type="mutagenesis site" description="No significant effect on binding to ACKR1." evidence="5">
    <original>Q</original>
    <variation>A</variation>
    <location>
        <position position="348"/>
    </location>
</feature>
<feature type="mutagenesis site" description="Reduces erythrocyte binding." evidence="8">
    <original>Q</original>
    <variation>D</variation>
    <variation>Y</variation>
    <location>
        <position position="356"/>
    </location>
</feature>
<feature type="mutagenesis site" description="Significantly reduces binding to ACKR1. Abolishes erythrocyte binding." evidence="5 8">
    <original>Y</original>
    <variation>A</variation>
    <location>
        <position position="363"/>
    </location>
</feature>
<feature type="mutagenesis site" description="Abolishes erythrocyte binding." evidence="8">
    <original>Y</original>
    <variation>L</variation>
    <location>
        <position position="363"/>
    </location>
</feature>
<feature type="mutagenesis site" description="Significantly reduces binding to ACKR1." evidence="5">
    <original>F</original>
    <variation>A</variation>
    <location>
        <position position="373"/>
    </location>
</feature>
<feature type="mutagenesis site" description="Significantly reduces binding to ACKR1." evidence="5">
    <original>I</original>
    <variation>A</variation>
    <location>
        <position position="376"/>
    </location>
</feature>
<feature type="mutagenesis site" description="Slightly reduces binding to ACKR1." evidence="5">
    <original>R</original>
    <variation>A</variation>
    <location>
        <position position="398"/>
    </location>
</feature>
<feature type="helix" evidence="34">
    <location>
        <begin position="215"/>
        <end position="217"/>
    </location>
</feature>
<feature type="strand" evidence="34">
    <location>
        <begin position="231"/>
        <end position="233"/>
    </location>
</feature>
<feature type="helix" evidence="34">
    <location>
        <begin position="240"/>
        <end position="244"/>
    </location>
</feature>
<feature type="helix" evidence="34">
    <location>
        <begin position="248"/>
        <end position="251"/>
    </location>
</feature>
<feature type="turn" evidence="38">
    <location>
        <begin position="253"/>
        <end position="255"/>
    </location>
</feature>
<feature type="strand" evidence="39">
    <location>
        <begin position="260"/>
        <end position="262"/>
    </location>
</feature>
<feature type="helix" evidence="34">
    <location>
        <begin position="268"/>
        <end position="290"/>
    </location>
</feature>
<feature type="turn" evidence="34">
    <location>
        <begin position="291"/>
        <end position="293"/>
    </location>
</feature>
<feature type="strand" evidence="39">
    <location>
        <begin position="294"/>
        <end position="296"/>
    </location>
</feature>
<feature type="helix" evidence="34">
    <location>
        <begin position="297"/>
        <end position="315"/>
    </location>
</feature>
<feature type="helix" evidence="34">
    <location>
        <begin position="324"/>
        <end position="336"/>
    </location>
</feature>
<feature type="strand" evidence="36">
    <location>
        <begin position="338"/>
        <end position="340"/>
    </location>
</feature>
<feature type="helix" evidence="34">
    <location>
        <begin position="342"/>
        <end position="361"/>
    </location>
</feature>
<feature type="turn" evidence="34">
    <location>
        <begin position="362"/>
        <end position="364"/>
    </location>
</feature>
<feature type="helix" evidence="34">
    <location>
        <begin position="366"/>
        <end position="369"/>
    </location>
</feature>
<feature type="helix" evidence="34">
    <location>
        <begin position="370"/>
        <end position="375"/>
    </location>
</feature>
<feature type="helix" evidence="34">
    <location>
        <begin position="379"/>
        <end position="383"/>
    </location>
</feature>
<feature type="helix" evidence="34">
    <location>
        <begin position="388"/>
        <end position="415"/>
    </location>
</feature>
<feature type="strand" evidence="34">
    <location>
        <begin position="417"/>
        <end position="422"/>
    </location>
</feature>
<feature type="helix" evidence="34">
    <location>
        <begin position="425"/>
        <end position="427"/>
    </location>
</feature>
<feature type="helix" evidence="34">
    <location>
        <begin position="430"/>
        <end position="464"/>
    </location>
</feature>
<feature type="turn" evidence="37">
    <location>
        <begin position="468"/>
        <end position="470"/>
    </location>
</feature>
<feature type="helix" evidence="34">
    <location>
        <begin position="474"/>
        <end position="481"/>
    </location>
</feature>
<feature type="strand" evidence="35">
    <location>
        <begin position="482"/>
        <end position="484"/>
    </location>
</feature>
<feature type="helix" evidence="34">
    <location>
        <begin position="487"/>
        <end position="494"/>
    </location>
</feature>
<feature type="helix" evidence="34">
    <location>
        <begin position="499"/>
        <end position="505"/>
    </location>
</feature>
<accession>P22290</accession>
<accession>A5KDR7</accession>
<dbReference type="EMBL" id="M61095">
    <property type="protein sequence ID" value="AAA63423.1"/>
    <property type="molecule type" value="Genomic_DNA"/>
</dbReference>
<dbReference type="EMBL" id="AAKM01002769">
    <property type="protein sequence ID" value="EDL42363.1"/>
    <property type="molecule type" value="Genomic_DNA"/>
</dbReference>
<dbReference type="PIR" id="T30848">
    <property type="entry name" value="T30848"/>
</dbReference>
<dbReference type="RefSeq" id="XP_001608387.1">
    <property type="nucleotide sequence ID" value="XM_001608337.1"/>
</dbReference>
<dbReference type="PDB" id="3RRC">
    <property type="method" value="X-ray"/>
    <property type="resolution" value="1.95 A"/>
    <property type="chains" value="A/B=211-525"/>
</dbReference>
<dbReference type="PDB" id="4NUU">
    <property type="method" value="X-ray"/>
    <property type="resolution" value="1.95 A"/>
    <property type="chains" value="A/B=211-525"/>
</dbReference>
<dbReference type="PDB" id="4NUV">
    <property type="method" value="X-ray"/>
    <property type="resolution" value="2.60 A"/>
    <property type="chains" value="A/B=211-525"/>
</dbReference>
<dbReference type="PDB" id="4YFS">
    <property type="method" value="X-ray"/>
    <property type="resolution" value="2.10 A"/>
    <property type="chains" value="A=198-521"/>
</dbReference>
<dbReference type="PDB" id="5F3J">
    <property type="method" value="X-ray"/>
    <property type="resolution" value="4.00 A"/>
    <property type="chains" value="A/B=211-525"/>
</dbReference>
<dbReference type="PDB" id="6OAN">
    <property type="method" value="X-ray"/>
    <property type="resolution" value="2.90 A"/>
    <property type="chains" value="A/C=211-525"/>
</dbReference>
<dbReference type="PDB" id="6OAO">
    <property type="method" value="X-ray"/>
    <property type="resolution" value="3.50 A"/>
    <property type="chains" value="A/C/E/G/I/K=211-525"/>
</dbReference>
<dbReference type="PDB" id="6R2S">
    <property type="method" value="X-ray"/>
    <property type="resolution" value="3.04 A"/>
    <property type="chains" value="C=211-508"/>
</dbReference>
<dbReference type="PDB" id="8A44">
    <property type="method" value="X-ray"/>
    <property type="resolution" value="2.49 A"/>
    <property type="chains" value="A=215-508"/>
</dbReference>
<dbReference type="PDBsum" id="3RRC"/>
<dbReference type="PDBsum" id="4NUU"/>
<dbReference type="PDBsum" id="4NUV"/>
<dbReference type="PDBsum" id="4YFS"/>
<dbReference type="PDBsum" id="5F3J"/>
<dbReference type="PDBsum" id="6OAN"/>
<dbReference type="PDBsum" id="6OAO"/>
<dbReference type="PDBsum" id="6R2S"/>
<dbReference type="PDBsum" id="8A44"/>
<dbReference type="SMR" id="P22290"/>
<dbReference type="DIP" id="DIP-59099N"/>
<dbReference type="IntAct" id="P22290">
    <property type="interactions" value="1"/>
</dbReference>
<dbReference type="GlyCosmos" id="P22290">
    <property type="glycosylation" value="9 sites, No reported glycans"/>
</dbReference>
<dbReference type="ABCD" id="P22290">
    <property type="antibodies" value="26 sequenced antibodies"/>
</dbReference>
<dbReference type="EnsemblProtists" id="EDL42363">
    <property type="protein sequence ID" value="EDL42363"/>
    <property type="gene ID" value="PVX_110810"/>
</dbReference>
<dbReference type="KEGG" id="pvx:PVX_110810"/>
<dbReference type="VEuPathDB" id="PlasmoDB:PVX_110810"/>
<dbReference type="InParanoid" id="A5KDR7"/>
<dbReference type="OMA" id="NACKSYD"/>
<dbReference type="PhylomeDB" id="P22290"/>
<dbReference type="EvolutionaryTrace" id="P22290"/>
<dbReference type="Proteomes" id="UP000008333">
    <property type="component" value="Chromosome 6"/>
</dbReference>
<dbReference type="GO" id="GO:0016020">
    <property type="term" value="C:membrane"/>
    <property type="evidence" value="ECO:0007669"/>
    <property type="project" value="UniProtKB-KW"/>
</dbReference>
<dbReference type="GO" id="GO:0046789">
    <property type="term" value="F:host cell surface receptor binding"/>
    <property type="evidence" value="ECO:0007669"/>
    <property type="project" value="InterPro"/>
</dbReference>
<dbReference type="GO" id="GO:0042802">
    <property type="term" value="F:identical protein binding"/>
    <property type="evidence" value="ECO:0000353"/>
    <property type="project" value="IntAct"/>
</dbReference>
<dbReference type="FunFam" id="1.20.58.830:FF:000024">
    <property type="entry name" value="Duffy receptor"/>
    <property type="match status" value="1"/>
</dbReference>
<dbReference type="FunFam" id="1.10.1740.170:FF:000001">
    <property type="entry name" value="Erythrocyte binding antigen"/>
    <property type="match status" value="1"/>
</dbReference>
<dbReference type="Gene3D" id="1.20.58.830">
    <property type="match status" value="1"/>
</dbReference>
<dbReference type="Gene3D" id="1.20.1310.20">
    <property type="entry name" value="Duffy-antigen binding domain"/>
    <property type="match status" value="1"/>
</dbReference>
<dbReference type="Gene3D" id="1.10.1740.170">
    <property type="entry name" value="Erythrocyte binding antigen 175 region VI"/>
    <property type="match status" value="1"/>
</dbReference>
<dbReference type="InterPro" id="IPR042202">
    <property type="entry name" value="Duffy-ag-bd_sf"/>
</dbReference>
<dbReference type="InterPro" id="IPR008602">
    <property type="entry name" value="Duffy-antigen-binding"/>
</dbReference>
<dbReference type="InterPro" id="IPR021015">
    <property type="entry name" value="Duffy-antigen-binding_C"/>
</dbReference>
<dbReference type="InterPro" id="IPR021032">
    <property type="entry name" value="Duffy-antigen-binding_N"/>
</dbReference>
<dbReference type="InterPro" id="IPR021620">
    <property type="entry name" value="EBA-175_C"/>
</dbReference>
<dbReference type="InterPro" id="IPR043057">
    <property type="entry name" value="EBA-175_C_sf"/>
</dbReference>
<dbReference type="Pfam" id="PF12361">
    <property type="entry name" value="DBP"/>
    <property type="match status" value="1"/>
</dbReference>
<dbReference type="Pfam" id="PF05424">
    <property type="entry name" value="Duffy_binding"/>
    <property type="match status" value="1"/>
</dbReference>
<dbReference type="Pfam" id="PF12377">
    <property type="entry name" value="DuffyBP_N"/>
    <property type="match status" value="1"/>
</dbReference>
<dbReference type="Pfam" id="PF11556">
    <property type="entry name" value="EBA-175_VI"/>
    <property type="match status" value="1"/>
</dbReference>
<dbReference type="SUPFAM" id="SSF140924">
    <property type="entry name" value="Duffy binding domain-like"/>
    <property type="match status" value="1"/>
</dbReference>
<comment type="function">
    <text evidence="3 4 5 6 7 8 14">Binds to the human erythrocyte Duffy blood group determinant (ACKR1).</text>
</comment>
<comment type="subunit">
    <text evidence="3 4 5 6 7 8 14">Homodimer; dimerization (via PvRII region) is promoted by the interaction with human ACKR1 (PubMed:21743458, PubMed:24415938). Interacts (via PvRII region) with human ACKR1 (via N-terminal extracellular domain) (PubMed:10570199, PubMed:11279211, PubMed:15720551, PubMed:16024106, PubMed:21743458, PubMed:24415938, PubMed:8879225).</text>
</comment>
<comment type="interaction">
    <interactant intactId="EBI-15935953">
        <id>P22290</id>
    </interactant>
    <interactant intactId="EBI-15935953">
        <id>P22290</id>
        <label>PVDR</label>
    </interactant>
    <organismsDiffer>false</organismsDiffer>
    <experiments>2</experiments>
</comment>
<comment type="interaction">
    <interactant intactId="EBI-15935953">
        <id>P22290</id>
    </interactant>
    <interactant intactId="EBI-15935975">
        <id>Q16570-1</id>
        <label>ACKR1</label>
    </interactant>
    <organismsDiffer>true</organismsDiffer>
    <experiments>3</experiments>
</comment>
<comment type="subcellular location">
    <subcellularLocation>
        <location evidence="1">Membrane</location>
        <topology evidence="1">Single-pass type I membrane protein</topology>
    </subcellularLocation>
</comment>
<comment type="miscellaneous">
    <text evidence="12">Neutralizing antibodies raised against the protein inhibit the invasion of human red blood cells by parasites.</text>
</comment>
<proteinExistence type="evidence at protein level"/>